<reference key="1">
    <citation type="journal article" date="2001" name="Nature">
        <title>Complete genome sequence of a multiple drug resistant Salmonella enterica serovar Typhi CT18.</title>
        <authorList>
            <person name="Parkhill J."/>
            <person name="Dougan G."/>
            <person name="James K.D."/>
            <person name="Thomson N.R."/>
            <person name="Pickard D."/>
            <person name="Wain J."/>
            <person name="Churcher C.M."/>
            <person name="Mungall K.L."/>
            <person name="Bentley S.D."/>
            <person name="Holden M.T.G."/>
            <person name="Sebaihia M."/>
            <person name="Baker S."/>
            <person name="Basham D."/>
            <person name="Brooks K."/>
            <person name="Chillingworth T."/>
            <person name="Connerton P."/>
            <person name="Cronin A."/>
            <person name="Davis P."/>
            <person name="Davies R.M."/>
            <person name="Dowd L."/>
            <person name="White N."/>
            <person name="Farrar J."/>
            <person name="Feltwell T."/>
            <person name="Hamlin N."/>
            <person name="Haque A."/>
            <person name="Hien T.T."/>
            <person name="Holroyd S."/>
            <person name="Jagels K."/>
            <person name="Krogh A."/>
            <person name="Larsen T.S."/>
            <person name="Leather S."/>
            <person name="Moule S."/>
            <person name="O'Gaora P."/>
            <person name="Parry C."/>
            <person name="Quail M.A."/>
            <person name="Rutherford K.M."/>
            <person name="Simmonds M."/>
            <person name="Skelton J."/>
            <person name="Stevens K."/>
            <person name="Whitehead S."/>
            <person name="Barrell B.G."/>
        </authorList>
    </citation>
    <scope>NUCLEOTIDE SEQUENCE [LARGE SCALE GENOMIC DNA]</scope>
    <source>
        <strain>CT18</strain>
    </source>
</reference>
<reference key="2">
    <citation type="journal article" date="2003" name="J. Bacteriol.">
        <title>Comparative genomics of Salmonella enterica serovar Typhi strains Ty2 and CT18.</title>
        <authorList>
            <person name="Deng W."/>
            <person name="Liou S.-R."/>
            <person name="Plunkett G. III"/>
            <person name="Mayhew G.F."/>
            <person name="Rose D.J."/>
            <person name="Burland V."/>
            <person name="Kodoyianni V."/>
            <person name="Schwartz D.C."/>
            <person name="Blattner F.R."/>
        </authorList>
    </citation>
    <scope>NUCLEOTIDE SEQUENCE [LARGE SCALE GENOMIC DNA]</scope>
    <source>
        <strain>ATCC 700931 / Ty2</strain>
    </source>
</reference>
<proteinExistence type="inferred from homology"/>
<accession>Q8Z172</accession>
<accession>Q7C546</accession>
<evidence type="ECO:0000250" key="1">
    <source>
        <dbReference type="UniProtKB" id="P39301"/>
    </source>
</evidence>
<evidence type="ECO:0000305" key="2"/>
<keyword id="KW-0997">Cell inner membrane</keyword>
<keyword id="KW-1003">Cell membrane</keyword>
<keyword id="KW-0472">Membrane</keyword>
<keyword id="KW-0598">Phosphotransferase system</keyword>
<keyword id="KW-0762">Sugar transport</keyword>
<keyword id="KW-0812">Transmembrane</keyword>
<keyword id="KW-1133">Transmembrane helix</keyword>
<keyword id="KW-0813">Transport</keyword>
<organism>
    <name type="scientific">Salmonella typhi</name>
    <dbReference type="NCBI Taxonomy" id="90370"/>
    <lineage>
        <taxon>Bacteria</taxon>
        <taxon>Pseudomonadati</taxon>
        <taxon>Pseudomonadota</taxon>
        <taxon>Gammaproteobacteria</taxon>
        <taxon>Enterobacterales</taxon>
        <taxon>Enterobacteriaceae</taxon>
        <taxon>Salmonella</taxon>
    </lineage>
</organism>
<gene>
    <name type="primary">ulaA</name>
    <name type="ordered locus">STY4739</name>
    <name type="ordered locus">t4434</name>
</gene>
<feature type="chain" id="PRO_0000230659" description="Ascorbate-specific PTS system EIIC component">
    <location>
        <begin position="1"/>
        <end position="465"/>
    </location>
</feature>
<feature type="transmembrane region" description="Helical" evidence="1">
    <location>
        <begin position="14"/>
        <end position="34"/>
    </location>
</feature>
<feature type="transmembrane region" description="Helical" evidence="1">
    <location>
        <begin position="38"/>
        <end position="58"/>
    </location>
</feature>
<feature type="transmembrane region" description="Helical" evidence="1">
    <location>
        <begin position="101"/>
        <end position="121"/>
    </location>
</feature>
<feature type="transmembrane region" description="Helical" evidence="1">
    <location>
        <begin position="141"/>
        <end position="161"/>
    </location>
</feature>
<feature type="transmembrane region" description="Helical" evidence="1">
    <location>
        <begin position="233"/>
        <end position="253"/>
    </location>
</feature>
<feature type="transmembrane region" description="Helical" evidence="1">
    <location>
        <begin position="263"/>
        <end position="283"/>
    </location>
</feature>
<feature type="transmembrane region" description="Helical" evidence="1">
    <location>
        <begin position="316"/>
        <end position="336"/>
    </location>
</feature>
<feature type="transmembrane region" description="Helical" evidence="1">
    <location>
        <begin position="338"/>
        <end position="358"/>
    </location>
</feature>
<feature type="transmembrane region" description="Helical" evidence="1">
    <location>
        <begin position="379"/>
        <end position="399"/>
    </location>
</feature>
<feature type="transmembrane region" description="Helical" evidence="1">
    <location>
        <begin position="427"/>
        <end position="447"/>
    </location>
</feature>
<feature type="binding site" evidence="1">
    <location>
        <begin position="86"/>
        <end position="87"/>
    </location>
    <ligand>
        <name>L-ascorbate</name>
        <dbReference type="ChEBI" id="CHEBI:38290"/>
    </ligand>
</feature>
<feature type="binding site" evidence="1">
    <location>
        <begin position="135"/>
        <end position="139"/>
    </location>
    <ligand>
        <name>L-ascorbate</name>
        <dbReference type="ChEBI" id="CHEBI:38290"/>
    </ligand>
</feature>
<feature type="binding site" evidence="1">
    <location>
        <begin position="194"/>
        <end position="195"/>
    </location>
    <ligand>
        <name>L-ascorbate</name>
        <dbReference type="ChEBI" id="CHEBI:38290"/>
    </ligand>
</feature>
<feature type="binding site" evidence="1">
    <location>
        <position position="314"/>
    </location>
    <ligand>
        <name>L-ascorbate</name>
        <dbReference type="ChEBI" id="CHEBI:38290"/>
    </ligand>
</feature>
<protein>
    <recommendedName>
        <fullName evidence="1">Ascorbate-specific PTS system EIIC component</fullName>
    </recommendedName>
    <alternativeName>
        <fullName evidence="1">Ascorbate-specific permease IIC component UlaA</fullName>
    </alternativeName>
</protein>
<dbReference type="EMBL" id="AL513382">
    <property type="protein sequence ID" value="CAD06860.1"/>
    <property type="status" value="ALT_INIT"/>
    <property type="molecule type" value="Genomic_DNA"/>
</dbReference>
<dbReference type="EMBL" id="AE014613">
    <property type="protein sequence ID" value="AAO71881.1"/>
    <property type="status" value="ALT_INIT"/>
    <property type="molecule type" value="Genomic_DNA"/>
</dbReference>
<dbReference type="RefSeq" id="NP_458817.3">
    <property type="nucleotide sequence ID" value="NC_003198.1"/>
</dbReference>
<dbReference type="RefSeq" id="WP_000404875.1">
    <property type="nucleotide sequence ID" value="NZ_WSUR01000012.1"/>
</dbReference>
<dbReference type="SMR" id="Q8Z172"/>
<dbReference type="STRING" id="220341.gene:17588560"/>
<dbReference type="KEGG" id="stt:t4434"/>
<dbReference type="KEGG" id="sty:STY4739"/>
<dbReference type="PATRIC" id="fig|220341.7.peg.4840"/>
<dbReference type="eggNOG" id="COG3037">
    <property type="taxonomic scope" value="Bacteria"/>
</dbReference>
<dbReference type="HOGENOM" id="CLU_031784_1_0_6"/>
<dbReference type="OMA" id="IAHQQMF"/>
<dbReference type="OrthoDB" id="9796178at2"/>
<dbReference type="Proteomes" id="UP000000541">
    <property type="component" value="Chromosome"/>
</dbReference>
<dbReference type="Proteomes" id="UP000002670">
    <property type="component" value="Chromosome"/>
</dbReference>
<dbReference type="GO" id="GO:0005886">
    <property type="term" value="C:plasma membrane"/>
    <property type="evidence" value="ECO:0007669"/>
    <property type="project" value="UniProtKB-SubCell"/>
</dbReference>
<dbReference type="GO" id="GO:0009401">
    <property type="term" value="P:phosphoenolpyruvate-dependent sugar phosphotransferase system"/>
    <property type="evidence" value="ECO:0007669"/>
    <property type="project" value="UniProtKB-KW"/>
</dbReference>
<dbReference type="InterPro" id="IPR051562">
    <property type="entry name" value="Ascorbate-PTS_EIIC"/>
</dbReference>
<dbReference type="InterPro" id="IPR004703">
    <property type="entry name" value="PTS_sugar-sp_permease"/>
</dbReference>
<dbReference type="NCBIfam" id="NF006919">
    <property type="entry name" value="PRK09410.1-1"/>
    <property type="match status" value="1"/>
</dbReference>
<dbReference type="PANTHER" id="PTHR33843">
    <property type="entry name" value="ASCORBATE-SPECIFIC PTS SYSTEM EIIC COMPONENT"/>
    <property type="match status" value="1"/>
</dbReference>
<dbReference type="PANTHER" id="PTHR33843:SF4">
    <property type="entry name" value="ASCORBATE-SPECIFIC PTS SYSTEM EIIC COMPONENT"/>
    <property type="match status" value="1"/>
</dbReference>
<dbReference type="Pfam" id="PF03611">
    <property type="entry name" value="EIIC-GAT"/>
    <property type="match status" value="1"/>
</dbReference>
<name>ULAA_SALTI</name>
<comment type="function">
    <text evidence="1">The phosphoenolpyruvate-dependent sugar phosphotransferase system (sugar PTS), a major carbohydrate active transport system, catalyzes the phosphorylation of incoming sugar substrates concomitantly with their translocation across the cell membrane. The enzyme II UlaABC PTS system is involved in ascorbate transport.</text>
</comment>
<comment type="subunit">
    <text evidence="1">Homodimer.</text>
</comment>
<comment type="subcellular location">
    <subcellularLocation>
        <location evidence="1">Cell inner membrane</location>
        <topology evidence="1">Multi-pass membrane protein</topology>
    </subcellularLocation>
</comment>
<comment type="induction">
    <text evidence="1">Induced by L-ascorbate. Repressed by UlaR.</text>
</comment>
<comment type="domain">
    <text evidence="1">In classical PTS systems, the PTS EIIC type-2 domain forms the translocation channel and contains the specific substrate-binding site. UlaA does not exhibit the topological features of any recognized enzyme IIC.</text>
</comment>
<comment type="similarity">
    <text evidence="2">Belongs to the UlaA family.</text>
</comment>
<comment type="sequence caution" evidence="2">
    <conflict type="erroneous initiation">
        <sequence resource="EMBL-CDS" id="AAO71881"/>
    </conflict>
</comment>
<comment type="sequence caution" evidence="2">
    <conflict type="erroneous initiation">
        <sequence resource="EMBL-CDS" id="CAD06860"/>
    </conflict>
</comment>
<sequence length="465" mass="50802">MEILYNIFTIFFNQVMTNAPLLLGIVTCLGYILLRKSVSVIIKGTIKTIIGFMLLQAGSGILTSTFKPVVAKMSEVYGINGAISDTYASMMATIERMGDAYSWVGYAVLLALALNICYVLLRRITGIRTIMLTGHIMFQQAGLIAVSFYIFGYSMWTTIICTAILVSLYWGITSNMMYKPTQEVTDGCGFSIGHQQQFASWIAYKVAPFLGKKEESVEDLKLPGWLNIFHDNIVSTAIVMTIFFGAILLSFGIDTVQAMAGKVHWTVYILQTGFSFAVAIFIITQGVRMFVAELSEAFNGISQRLIPGAVLAIDCAAIYSFAPNAVVWGFMWGTIGQLIAVGILVACGSSILIIPGFIPMFFSNATIGVFANHFGGWRAALKICLVMGMIEIFGCVWAVKLTGMSAWMGMADWSILAPPMMQGFFSIGIAFMAVIIVIALAYMFFAGRALRAEEDAEKQLAEQSA</sequence>